<accession>Q5RFI9</accession>
<proteinExistence type="evidence at transcript level"/>
<keyword id="KW-0325">Glycoprotein</keyword>
<keyword id="KW-0472">Membrane</keyword>
<keyword id="KW-0597">Phosphoprotein</keyword>
<keyword id="KW-1185">Reference proteome</keyword>
<keyword id="KW-0732">Signal</keyword>
<keyword id="KW-0812">Transmembrane</keyword>
<keyword id="KW-1133">Transmembrane helix</keyword>
<protein>
    <recommendedName>
        <fullName>Endomucin</fullName>
    </recommendedName>
</protein>
<feature type="signal peptide" evidence="3">
    <location>
        <begin position="1"/>
        <end position="18"/>
    </location>
</feature>
<feature type="chain" id="PRO_0000249726" description="Endomucin">
    <location>
        <begin position="19"/>
        <end position="260"/>
    </location>
</feature>
<feature type="topological domain" description="Extracellular" evidence="3">
    <location>
        <begin position="19"/>
        <end position="189"/>
    </location>
</feature>
<feature type="transmembrane region" description="Helical" evidence="3">
    <location>
        <begin position="190"/>
        <end position="210"/>
    </location>
</feature>
<feature type="topological domain" description="Cytoplasmic" evidence="3">
    <location>
        <begin position="211"/>
        <end position="260"/>
    </location>
</feature>
<feature type="region of interest" description="Disordered" evidence="4">
    <location>
        <begin position="119"/>
        <end position="182"/>
    </location>
</feature>
<feature type="compositionally biased region" description="Polar residues" evidence="4">
    <location>
        <begin position="119"/>
        <end position="133"/>
    </location>
</feature>
<feature type="compositionally biased region" description="Polar residues" evidence="4">
    <location>
        <begin position="145"/>
        <end position="170"/>
    </location>
</feature>
<feature type="modified residue" description="Phosphoserine" evidence="2">
    <location>
        <position position="236"/>
    </location>
</feature>
<feature type="glycosylation site" description="N-linked (GlcNAc...) asparagine" evidence="3">
    <location>
        <position position="19"/>
    </location>
</feature>
<feature type="glycosylation site" description="N-linked (GlcNAc...) asparagine" evidence="3">
    <location>
        <position position="28"/>
    </location>
</feature>
<feature type="glycosylation site" description="N-linked (GlcNAc...) asparagine" evidence="3">
    <location>
        <position position="97"/>
    </location>
</feature>
<feature type="glycosylation site" description="N-linked (GlcNAc...) asparagine" evidence="3">
    <location>
        <position position="103"/>
    </location>
</feature>
<feature type="glycosylation site" description="N-linked (GlcNAc...) asparagine" evidence="3">
    <location>
        <position position="163"/>
    </location>
</feature>
<feature type="glycosylation site" description="N-linked (GlcNAc...) asparagine" evidence="3">
    <location>
        <position position="177"/>
    </location>
</feature>
<evidence type="ECO:0000250" key="1"/>
<evidence type="ECO:0000250" key="2">
    <source>
        <dbReference type="UniProtKB" id="Q9R0H2"/>
    </source>
</evidence>
<evidence type="ECO:0000255" key="3"/>
<evidence type="ECO:0000256" key="4">
    <source>
        <dbReference type="SAM" id="MobiDB-lite"/>
    </source>
</evidence>
<evidence type="ECO:0000305" key="5"/>
<sequence>MELLQVTILFLLPSICSSNSTGVLEAANNSLVVTTIKTSITTPNTESLQKNVITPTTGTTPKGKITNELLKMSLMSAVTLTSKDEGLKVTTTDVRKNESIVSNVTVTIVTLPNAVSTLQSSKPKTETQSSIKTTEIPGSILQPDASPSETGTLSSIPVTIPENTSQSQVIGTEGGKNASTSATSRSYSSIILPVVIALIVITLSVFVLVGLYRMCWKADPGTPENGNDQPQSDKESVKLLTVKTISHESGEHSAQGKTKN</sequence>
<reference key="1">
    <citation type="submission" date="2004-11" db="EMBL/GenBank/DDBJ databases">
        <authorList>
            <consortium name="The German cDNA consortium"/>
        </authorList>
    </citation>
    <scope>NUCLEOTIDE SEQUENCE [LARGE SCALE MRNA]</scope>
    <source>
        <tissue>Kidney</tissue>
    </source>
</reference>
<dbReference type="EMBL" id="CR857167">
    <property type="protein sequence ID" value="CAH89468.1"/>
    <property type="molecule type" value="mRNA"/>
</dbReference>
<dbReference type="RefSeq" id="NP_001128972.1">
    <property type="nucleotide sequence ID" value="NM_001135500.1"/>
</dbReference>
<dbReference type="FunCoup" id="Q5RFI9">
    <property type="interactions" value="11"/>
</dbReference>
<dbReference type="STRING" id="9601.ENSPPYP00000016704"/>
<dbReference type="GlyCosmos" id="Q5RFI9">
    <property type="glycosylation" value="6 sites, No reported glycans"/>
</dbReference>
<dbReference type="Ensembl" id="ENSPPYT00000017383.3">
    <property type="protein sequence ID" value="ENSPPYP00000016704.2"/>
    <property type="gene ID" value="ENSPPYG00000014959.3"/>
</dbReference>
<dbReference type="GeneID" id="100190812"/>
<dbReference type="KEGG" id="pon:100190812"/>
<dbReference type="CTD" id="51705"/>
<dbReference type="eggNOG" id="ENOG502S6VA">
    <property type="taxonomic scope" value="Eukaryota"/>
</dbReference>
<dbReference type="GeneTree" id="ENSGT00390000012139"/>
<dbReference type="HOGENOM" id="CLU_092835_0_0_1"/>
<dbReference type="InParanoid" id="Q5RFI9"/>
<dbReference type="OrthoDB" id="9632909at2759"/>
<dbReference type="TreeFam" id="TF337783"/>
<dbReference type="Proteomes" id="UP000001595">
    <property type="component" value="Chromosome 4"/>
</dbReference>
<dbReference type="GO" id="GO:0016020">
    <property type="term" value="C:membrane"/>
    <property type="evidence" value="ECO:0007669"/>
    <property type="project" value="UniProtKB-SubCell"/>
</dbReference>
<dbReference type="InterPro" id="IPR010740">
    <property type="entry name" value="Endomucin"/>
</dbReference>
<dbReference type="PANTHER" id="PTHR15869:SF0">
    <property type="entry name" value="ENDOMUCIN"/>
    <property type="match status" value="1"/>
</dbReference>
<dbReference type="PANTHER" id="PTHR15869">
    <property type="entry name" value="ENDOMUCIN-RELATED"/>
    <property type="match status" value="1"/>
</dbReference>
<dbReference type="Pfam" id="PF07010">
    <property type="entry name" value="Endomucin"/>
    <property type="match status" value="1"/>
</dbReference>
<comment type="function">
    <text evidence="1">Endothelial sialomucin, also called endomucin or mucin-like sialoglycoprotein, which interferes with the assembly of focal adhesion complexes and inhibits interaction between cells and the extracellular matrix.</text>
</comment>
<comment type="subcellular location">
    <subcellularLocation>
        <location evidence="5">Membrane</location>
        <topology evidence="5">Single-pass membrane protein</topology>
    </subcellularLocation>
</comment>
<comment type="PTM">
    <text evidence="1">Highly O-glycosylated. Sialic acid-rich glycoprotein (By similarity).</text>
</comment>
<gene>
    <name type="primary">EMCN</name>
</gene>
<name>MUCEN_PONAB</name>
<organism>
    <name type="scientific">Pongo abelii</name>
    <name type="common">Sumatran orangutan</name>
    <name type="synonym">Pongo pygmaeus abelii</name>
    <dbReference type="NCBI Taxonomy" id="9601"/>
    <lineage>
        <taxon>Eukaryota</taxon>
        <taxon>Metazoa</taxon>
        <taxon>Chordata</taxon>
        <taxon>Craniata</taxon>
        <taxon>Vertebrata</taxon>
        <taxon>Euteleostomi</taxon>
        <taxon>Mammalia</taxon>
        <taxon>Eutheria</taxon>
        <taxon>Euarchontoglires</taxon>
        <taxon>Primates</taxon>
        <taxon>Haplorrhini</taxon>
        <taxon>Catarrhini</taxon>
        <taxon>Hominidae</taxon>
        <taxon>Pongo</taxon>
    </lineage>
</organism>